<organism>
    <name type="scientific">Bos taurus</name>
    <name type="common">Bovine</name>
    <dbReference type="NCBI Taxonomy" id="9913"/>
    <lineage>
        <taxon>Eukaryota</taxon>
        <taxon>Metazoa</taxon>
        <taxon>Chordata</taxon>
        <taxon>Craniata</taxon>
        <taxon>Vertebrata</taxon>
        <taxon>Euteleostomi</taxon>
        <taxon>Mammalia</taxon>
        <taxon>Eutheria</taxon>
        <taxon>Laurasiatheria</taxon>
        <taxon>Artiodactyla</taxon>
        <taxon>Ruminantia</taxon>
        <taxon>Pecora</taxon>
        <taxon>Bovidae</taxon>
        <taxon>Bovinae</taxon>
        <taxon>Bos</taxon>
    </lineage>
</organism>
<protein>
    <recommendedName>
        <fullName>Protein cornichon homolog 4</fullName>
        <shortName>CNIH-4</shortName>
    </recommendedName>
    <alternativeName>
        <fullName>Cornichon family AMPA receptor auxiliary protein 4</fullName>
    </alternativeName>
</protein>
<evidence type="ECO:0000250" key="1">
    <source>
        <dbReference type="UniProtKB" id="Q9P003"/>
    </source>
</evidence>
<evidence type="ECO:0000255" key="2"/>
<evidence type="ECO:0000305" key="3"/>
<feature type="chain" id="PRO_0000245862" description="Protein cornichon homolog 4">
    <location>
        <begin position="1"/>
        <end position="139"/>
    </location>
</feature>
<feature type="transmembrane region" description="Helical" evidence="2">
    <location>
        <begin position="5"/>
        <end position="25"/>
    </location>
</feature>
<feature type="transmembrane region" description="Helical" evidence="2">
    <location>
        <begin position="57"/>
        <end position="77"/>
    </location>
</feature>
<feature type="transmembrane region" description="Helical" evidence="2">
    <location>
        <begin position="118"/>
        <end position="138"/>
    </location>
</feature>
<accession>Q3T126</accession>
<keyword id="KW-0256">Endoplasmic reticulum</keyword>
<keyword id="KW-0931">ER-Golgi transport</keyword>
<keyword id="KW-0472">Membrane</keyword>
<keyword id="KW-0653">Protein transport</keyword>
<keyword id="KW-1185">Reference proteome</keyword>
<keyword id="KW-0812">Transmembrane</keyword>
<keyword id="KW-1133">Transmembrane helix</keyword>
<keyword id="KW-0813">Transport</keyword>
<name>CNIH4_BOVIN</name>
<reference key="1">
    <citation type="submission" date="2005-08" db="EMBL/GenBank/DDBJ databases">
        <authorList>
            <consortium name="NIH - Mammalian Gene Collection (MGC) project"/>
        </authorList>
    </citation>
    <scope>NUCLEOTIDE SEQUENCE [LARGE SCALE MRNA]</scope>
    <source>
        <strain>Crossbred X Angus</strain>
        <tissue>Ileum</tissue>
    </source>
</reference>
<gene>
    <name type="primary">CNIH4</name>
</gene>
<sequence>MEAVVFVFSLLDCCALIFLSVYFIITLSDLECDYINARSCCSKLNKWVIPELVGHTLVTVLMLISLHWFIFLLNLPVAAWNIYRYIMVPSGNMGVFDPTEIHNRGQLKSHMKEAMIKLGFHLLCFFMYLYSMILALIND</sequence>
<dbReference type="EMBL" id="BC102152">
    <property type="protein sequence ID" value="AAI02153.1"/>
    <property type="molecule type" value="mRNA"/>
</dbReference>
<dbReference type="RefSeq" id="NP_001029510.1">
    <property type="nucleotide sequence ID" value="NM_001034338.2"/>
</dbReference>
<dbReference type="SMR" id="Q3T126"/>
<dbReference type="FunCoup" id="Q3T126">
    <property type="interactions" value="2653"/>
</dbReference>
<dbReference type="STRING" id="9913.ENSBTAP00000025936"/>
<dbReference type="PaxDb" id="9913-ENSBTAP00000025936"/>
<dbReference type="Ensembl" id="ENSBTAT00000025936.7">
    <property type="protein sequence ID" value="ENSBTAP00000025936.5"/>
    <property type="gene ID" value="ENSBTAG00000019471.7"/>
</dbReference>
<dbReference type="GeneID" id="508912"/>
<dbReference type="KEGG" id="bta:508912"/>
<dbReference type="CTD" id="29097"/>
<dbReference type="VEuPathDB" id="HostDB:ENSBTAG00000019471"/>
<dbReference type="VGNC" id="VGNC:27504">
    <property type="gene designation" value="CNIH4"/>
</dbReference>
<dbReference type="eggNOG" id="KOG2729">
    <property type="taxonomic scope" value="Eukaryota"/>
</dbReference>
<dbReference type="GeneTree" id="ENSGT00950000182834"/>
<dbReference type="HOGENOM" id="CLU_112942_0_1_1"/>
<dbReference type="InParanoid" id="Q3T126"/>
<dbReference type="OMA" id="HKKECFI"/>
<dbReference type="OrthoDB" id="8775810at2759"/>
<dbReference type="TreeFam" id="TF300083"/>
<dbReference type="Proteomes" id="UP000009136">
    <property type="component" value="Chromosome 16"/>
</dbReference>
<dbReference type="Bgee" id="ENSBTAG00000019471">
    <property type="expression patterns" value="Expressed in oocyte and 102 other cell types or tissues"/>
</dbReference>
<dbReference type="GO" id="GO:0030134">
    <property type="term" value="C:COPII-coated ER to Golgi transport vesicle"/>
    <property type="evidence" value="ECO:0000318"/>
    <property type="project" value="GO_Central"/>
</dbReference>
<dbReference type="GO" id="GO:0005783">
    <property type="term" value="C:endoplasmic reticulum"/>
    <property type="evidence" value="ECO:0000250"/>
    <property type="project" value="UniProtKB"/>
</dbReference>
<dbReference type="GO" id="GO:0005789">
    <property type="term" value="C:endoplasmic reticulum membrane"/>
    <property type="evidence" value="ECO:0000318"/>
    <property type="project" value="GO_Central"/>
</dbReference>
<dbReference type="GO" id="GO:0005793">
    <property type="term" value="C:endoplasmic reticulum-Golgi intermediate compartment"/>
    <property type="evidence" value="ECO:0000250"/>
    <property type="project" value="UniProtKB"/>
</dbReference>
<dbReference type="GO" id="GO:0031730">
    <property type="term" value="F:CCR5 chemokine receptor binding"/>
    <property type="evidence" value="ECO:0007669"/>
    <property type="project" value="Ensembl"/>
</dbReference>
<dbReference type="GO" id="GO:0005102">
    <property type="term" value="F:signaling receptor binding"/>
    <property type="evidence" value="ECO:0000318"/>
    <property type="project" value="GO_Central"/>
</dbReference>
<dbReference type="GO" id="GO:0006888">
    <property type="term" value="P:endoplasmic reticulum to Golgi vesicle-mediated transport"/>
    <property type="evidence" value="ECO:0000250"/>
    <property type="project" value="UniProtKB"/>
</dbReference>
<dbReference type="GO" id="GO:0015031">
    <property type="term" value="P:protein transport"/>
    <property type="evidence" value="ECO:0007669"/>
    <property type="project" value="UniProtKB-KW"/>
</dbReference>
<dbReference type="InterPro" id="IPR003377">
    <property type="entry name" value="Cornichon"/>
</dbReference>
<dbReference type="PANTHER" id="PTHR12290">
    <property type="entry name" value="CORNICHON-RELATED"/>
    <property type="match status" value="1"/>
</dbReference>
<dbReference type="Pfam" id="PF03311">
    <property type="entry name" value="Cornichon"/>
    <property type="match status" value="1"/>
</dbReference>
<dbReference type="SMART" id="SM01398">
    <property type="entry name" value="Cornichon"/>
    <property type="match status" value="1"/>
</dbReference>
<comment type="function">
    <text evidence="1">Involved in G protein-coupled receptors (GPCRs) trafficking from the endoplasmic reticulum to the cell surface; it promotes the exit of GPCRs from the early secretory pathway, likely through interaction with the COPII machinery.</text>
</comment>
<comment type="subunit">
    <text evidence="1">Interacts with Sec23/24 complex components SEC24B and SEC24D (By similarity). Interacts with CCR5 (By similarity). Interacts with ADRB2 in the early secretory pathway (By similarity).</text>
</comment>
<comment type="subcellular location">
    <subcellularLocation>
        <location evidence="3">Membrane</location>
        <topology evidence="3">Multi-pass membrane protein</topology>
    </subcellularLocation>
    <subcellularLocation>
        <location evidence="1">Endoplasmic reticulum</location>
    </subcellularLocation>
    <subcellularLocation>
        <location evidence="1">Endoplasmic reticulum-Golgi intermediate compartment</location>
    </subcellularLocation>
</comment>
<comment type="similarity">
    <text evidence="3">Belongs to the cornichon family.</text>
</comment>
<proteinExistence type="evidence at transcript level"/>